<gene>
    <name evidence="1" type="primary">queA</name>
    <name type="ordered locus">ECS88_0400</name>
</gene>
<sequence length="356" mass="39413">MRVTDFSFELPESLIAHYPMPERSSCRLLSLDGPTGALTHGTFTDLLDKLNPGDLLVFNNTRVIPARLFGRKASGGKIEVLVERMLDEKRILAHIRASKAPKPGAELLLGDDESINATMTARHGALFEVEFNDDRSVLDILNSIGHIPLPPYIDRPDEDADRELYQTVYSEKPGAVAAPTAGLHFDEPLLEKLRAKGVEMAFVTLHVGAGTFQPVRVDTIEDHIMHSEYAEVPQDVVDAVLAAKARGNRVIAVGTTSVRSLESAAQAAKNDLIEPFFDDTQIFIYPGFQYKVVDALVTNFHLPESTLIMLVSAFAGYQHTMNAYKAAVEEKYRFFSYGDAMFITYNPQAINERVGE</sequence>
<accession>B7MD63</accession>
<organism>
    <name type="scientific">Escherichia coli O45:K1 (strain S88 / ExPEC)</name>
    <dbReference type="NCBI Taxonomy" id="585035"/>
    <lineage>
        <taxon>Bacteria</taxon>
        <taxon>Pseudomonadati</taxon>
        <taxon>Pseudomonadota</taxon>
        <taxon>Gammaproteobacteria</taxon>
        <taxon>Enterobacterales</taxon>
        <taxon>Enterobacteriaceae</taxon>
        <taxon>Escherichia</taxon>
    </lineage>
</organism>
<comment type="function">
    <text evidence="1">Transfers and isomerizes the ribose moiety from AdoMet to the 7-aminomethyl group of 7-deazaguanine (preQ1-tRNA) to give epoxyqueuosine (oQ-tRNA).</text>
</comment>
<comment type="catalytic activity">
    <reaction evidence="1">
        <text>7-aminomethyl-7-carbaguanosine(34) in tRNA + S-adenosyl-L-methionine = epoxyqueuosine(34) in tRNA + adenine + L-methionine + 2 H(+)</text>
        <dbReference type="Rhea" id="RHEA:32155"/>
        <dbReference type="Rhea" id="RHEA-COMP:10342"/>
        <dbReference type="Rhea" id="RHEA-COMP:18582"/>
        <dbReference type="ChEBI" id="CHEBI:15378"/>
        <dbReference type="ChEBI" id="CHEBI:16708"/>
        <dbReference type="ChEBI" id="CHEBI:57844"/>
        <dbReference type="ChEBI" id="CHEBI:59789"/>
        <dbReference type="ChEBI" id="CHEBI:82833"/>
        <dbReference type="ChEBI" id="CHEBI:194443"/>
        <dbReference type="EC" id="2.4.99.17"/>
    </reaction>
</comment>
<comment type="pathway">
    <text evidence="1">tRNA modification; tRNA-queuosine biosynthesis.</text>
</comment>
<comment type="subunit">
    <text evidence="1">Monomer.</text>
</comment>
<comment type="subcellular location">
    <subcellularLocation>
        <location evidence="1">Cytoplasm</location>
    </subcellularLocation>
</comment>
<comment type="similarity">
    <text evidence="1">Belongs to the QueA family.</text>
</comment>
<proteinExistence type="inferred from homology"/>
<reference key="1">
    <citation type="journal article" date="2009" name="PLoS Genet.">
        <title>Organised genome dynamics in the Escherichia coli species results in highly diverse adaptive paths.</title>
        <authorList>
            <person name="Touchon M."/>
            <person name="Hoede C."/>
            <person name="Tenaillon O."/>
            <person name="Barbe V."/>
            <person name="Baeriswyl S."/>
            <person name="Bidet P."/>
            <person name="Bingen E."/>
            <person name="Bonacorsi S."/>
            <person name="Bouchier C."/>
            <person name="Bouvet O."/>
            <person name="Calteau A."/>
            <person name="Chiapello H."/>
            <person name="Clermont O."/>
            <person name="Cruveiller S."/>
            <person name="Danchin A."/>
            <person name="Diard M."/>
            <person name="Dossat C."/>
            <person name="Karoui M.E."/>
            <person name="Frapy E."/>
            <person name="Garry L."/>
            <person name="Ghigo J.M."/>
            <person name="Gilles A.M."/>
            <person name="Johnson J."/>
            <person name="Le Bouguenec C."/>
            <person name="Lescat M."/>
            <person name="Mangenot S."/>
            <person name="Martinez-Jehanne V."/>
            <person name="Matic I."/>
            <person name="Nassif X."/>
            <person name="Oztas S."/>
            <person name="Petit M.A."/>
            <person name="Pichon C."/>
            <person name="Rouy Z."/>
            <person name="Ruf C.S."/>
            <person name="Schneider D."/>
            <person name="Tourret J."/>
            <person name="Vacherie B."/>
            <person name="Vallenet D."/>
            <person name="Medigue C."/>
            <person name="Rocha E.P.C."/>
            <person name="Denamur E."/>
        </authorList>
    </citation>
    <scope>NUCLEOTIDE SEQUENCE [LARGE SCALE GENOMIC DNA]</scope>
    <source>
        <strain>S88 / ExPEC</strain>
    </source>
</reference>
<dbReference type="EC" id="2.4.99.17" evidence="1"/>
<dbReference type="EMBL" id="CU928161">
    <property type="protein sequence ID" value="CAR01748.1"/>
    <property type="molecule type" value="Genomic_DNA"/>
</dbReference>
<dbReference type="RefSeq" id="WP_001266511.1">
    <property type="nucleotide sequence ID" value="NC_011742.1"/>
</dbReference>
<dbReference type="SMR" id="B7MD63"/>
<dbReference type="KEGG" id="ecz:ECS88_0400"/>
<dbReference type="HOGENOM" id="CLU_039110_1_0_6"/>
<dbReference type="UniPathway" id="UPA00392"/>
<dbReference type="Proteomes" id="UP000000747">
    <property type="component" value="Chromosome"/>
</dbReference>
<dbReference type="GO" id="GO:0005737">
    <property type="term" value="C:cytoplasm"/>
    <property type="evidence" value="ECO:0007669"/>
    <property type="project" value="UniProtKB-SubCell"/>
</dbReference>
<dbReference type="GO" id="GO:0051075">
    <property type="term" value="F:S-adenosylmethionine:tRNA ribosyltransferase-isomerase activity"/>
    <property type="evidence" value="ECO:0007669"/>
    <property type="project" value="UniProtKB-EC"/>
</dbReference>
<dbReference type="GO" id="GO:0008616">
    <property type="term" value="P:queuosine biosynthetic process"/>
    <property type="evidence" value="ECO:0007669"/>
    <property type="project" value="UniProtKB-UniRule"/>
</dbReference>
<dbReference type="GO" id="GO:0002099">
    <property type="term" value="P:tRNA wobble guanine modification"/>
    <property type="evidence" value="ECO:0007669"/>
    <property type="project" value="TreeGrafter"/>
</dbReference>
<dbReference type="FunFam" id="2.40.10.240:FF:000001">
    <property type="entry name" value="S-adenosylmethionine:tRNA ribosyltransferase-isomerase"/>
    <property type="match status" value="1"/>
</dbReference>
<dbReference type="FunFam" id="3.40.1780.10:FF:000001">
    <property type="entry name" value="S-adenosylmethionine:tRNA ribosyltransferase-isomerase"/>
    <property type="match status" value="1"/>
</dbReference>
<dbReference type="Gene3D" id="2.40.10.240">
    <property type="entry name" value="QueA-like"/>
    <property type="match status" value="1"/>
</dbReference>
<dbReference type="Gene3D" id="3.40.1780.10">
    <property type="entry name" value="QueA-like"/>
    <property type="match status" value="1"/>
</dbReference>
<dbReference type="HAMAP" id="MF_00113">
    <property type="entry name" value="QueA"/>
    <property type="match status" value="1"/>
</dbReference>
<dbReference type="InterPro" id="IPR003699">
    <property type="entry name" value="QueA"/>
</dbReference>
<dbReference type="InterPro" id="IPR042118">
    <property type="entry name" value="QueA_dom1"/>
</dbReference>
<dbReference type="InterPro" id="IPR042119">
    <property type="entry name" value="QueA_dom2"/>
</dbReference>
<dbReference type="InterPro" id="IPR036100">
    <property type="entry name" value="QueA_sf"/>
</dbReference>
<dbReference type="NCBIfam" id="NF001140">
    <property type="entry name" value="PRK00147.1"/>
    <property type="match status" value="1"/>
</dbReference>
<dbReference type="NCBIfam" id="TIGR00113">
    <property type="entry name" value="queA"/>
    <property type="match status" value="1"/>
</dbReference>
<dbReference type="PANTHER" id="PTHR30307">
    <property type="entry name" value="S-ADENOSYLMETHIONINE:TRNA RIBOSYLTRANSFERASE-ISOMERASE"/>
    <property type="match status" value="1"/>
</dbReference>
<dbReference type="PANTHER" id="PTHR30307:SF0">
    <property type="entry name" value="S-ADENOSYLMETHIONINE:TRNA RIBOSYLTRANSFERASE-ISOMERASE"/>
    <property type="match status" value="1"/>
</dbReference>
<dbReference type="Pfam" id="PF02547">
    <property type="entry name" value="Queuosine_synth"/>
    <property type="match status" value="1"/>
</dbReference>
<dbReference type="SUPFAM" id="SSF111337">
    <property type="entry name" value="QueA-like"/>
    <property type="match status" value="1"/>
</dbReference>
<evidence type="ECO:0000255" key="1">
    <source>
        <dbReference type="HAMAP-Rule" id="MF_00113"/>
    </source>
</evidence>
<feature type="chain" id="PRO_1000117529" description="S-adenosylmethionine:tRNA ribosyltransferase-isomerase">
    <location>
        <begin position="1"/>
        <end position="356"/>
    </location>
</feature>
<keyword id="KW-0963">Cytoplasm</keyword>
<keyword id="KW-0671">Queuosine biosynthesis</keyword>
<keyword id="KW-1185">Reference proteome</keyword>
<keyword id="KW-0949">S-adenosyl-L-methionine</keyword>
<keyword id="KW-0808">Transferase</keyword>
<protein>
    <recommendedName>
        <fullName evidence="1">S-adenosylmethionine:tRNA ribosyltransferase-isomerase</fullName>
        <ecNumber evidence="1">2.4.99.17</ecNumber>
    </recommendedName>
    <alternativeName>
        <fullName evidence="1">Queuosine biosynthesis protein QueA</fullName>
    </alternativeName>
</protein>
<name>QUEA_ECO45</name>